<comment type="similarity">
    <text evidence="1">Belongs to the acetyltransferase family. YpeA subfamily.</text>
</comment>
<comment type="sequence caution" evidence="2">
    <conflict type="erroneous initiation">
        <sequence resource="EMBL-CDS" id="ABE08227"/>
    </conflict>
</comment>
<accession>Q1R8T7</accession>
<feature type="chain" id="PRO_0000298439" description="Acetyltransferase YpeA">
    <location>
        <begin position="1"/>
        <end position="141"/>
    </location>
</feature>
<feature type="domain" description="N-acetyltransferase" evidence="1">
    <location>
        <begin position="1"/>
        <end position="141"/>
    </location>
</feature>
<organism>
    <name type="scientific">Escherichia coli (strain UTI89 / UPEC)</name>
    <dbReference type="NCBI Taxonomy" id="364106"/>
    <lineage>
        <taxon>Bacteria</taxon>
        <taxon>Pseudomonadati</taxon>
        <taxon>Pseudomonadota</taxon>
        <taxon>Gammaproteobacteria</taxon>
        <taxon>Enterobacterales</taxon>
        <taxon>Enterobacteriaceae</taxon>
        <taxon>Escherichia</taxon>
    </lineage>
</organism>
<gene>
    <name evidence="1" type="primary">ypeA</name>
    <name type="ordered locus">UTI89_C2767</name>
</gene>
<reference key="1">
    <citation type="journal article" date="2006" name="Proc. Natl. Acad. Sci. U.S.A.">
        <title>Identification of genes subject to positive selection in uropathogenic strains of Escherichia coli: a comparative genomics approach.</title>
        <authorList>
            <person name="Chen S.L."/>
            <person name="Hung C.-S."/>
            <person name="Xu J."/>
            <person name="Reigstad C.S."/>
            <person name="Magrini V."/>
            <person name="Sabo A."/>
            <person name="Blasiar D."/>
            <person name="Bieri T."/>
            <person name="Meyer R.R."/>
            <person name="Ozersky P."/>
            <person name="Armstrong J.R."/>
            <person name="Fulton R.S."/>
            <person name="Latreille J.P."/>
            <person name="Spieth J."/>
            <person name="Hooton T.M."/>
            <person name="Mardis E.R."/>
            <person name="Hultgren S.J."/>
            <person name="Gordon J.I."/>
        </authorList>
    </citation>
    <scope>NUCLEOTIDE SEQUENCE [LARGE SCALE GENOMIC DNA]</scope>
    <source>
        <strain>UTI89 / UPEC</strain>
    </source>
</reference>
<protein>
    <recommendedName>
        <fullName evidence="1">Acetyltransferase YpeA</fullName>
        <ecNumber evidence="1">2.3.1.-</ecNumber>
    </recommendedName>
</protein>
<dbReference type="EC" id="2.3.1.-" evidence="1"/>
<dbReference type="EMBL" id="CP000243">
    <property type="protein sequence ID" value="ABE08227.1"/>
    <property type="status" value="ALT_INIT"/>
    <property type="molecule type" value="Genomic_DNA"/>
</dbReference>
<dbReference type="RefSeq" id="WP_000406000.1">
    <property type="nucleotide sequence ID" value="NZ_CP064825.1"/>
</dbReference>
<dbReference type="SMR" id="Q1R8T7"/>
<dbReference type="KEGG" id="eci:UTI89_C2767"/>
<dbReference type="HOGENOM" id="CLU_013985_34_1_6"/>
<dbReference type="Proteomes" id="UP000001952">
    <property type="component" value="Chromosome"/>
</dbReference>
<dbReference type="GO" id="GO:0016747">
    <property type="term" value="F:acyltransferase activity, transferring groups other than amino-acyl groups"/>
    <property type="evidence" value="ECO:0007669"/>
    <property type="project" value="UniProtKB-UniRule"/>
</dbReference>
<dbReference type="CDD" id="cd04301">
    <property type="entry name" value="NAT_SF"/>
    <property type="match status" value="1"/>
</dbReference>
<dbReference type="Gene3D" id="3.40.630.30">
    <property type="match status" value="1"/>
</dbReference>
<dbReference type="HAMAP" id="MF_01127">
    <property type="entry name" value="Acetyltransf_YpeA"/>
    <property type="match status" value="1"/>
</dbReference>
<dbReference type="InterPro" id="IPR023072">
    <property type="entry name" value="Acetyltransferase_YpeA"/>
</dbReference>
<dbReference type="InterPro" id="IPR016181">
    <property type="entry name" value="Acyl_CoA_acyltransferase"/>
</dbReference>
<dbReference type="InterPro" id="IPR050832">
    <property type="entry name" value="Bact_Acetyltransf"/>
</dbReference>
<dbReference type="InterPro" id="IPR000182">
    <property type="entry name" value="GNAT_dom"/>
</dbReference>
<dbReference type="NCBIfam" id="NF002959">
    <property type="entry name" value="PRK03624.1"/>
    <property type="match status" value="1"/>
</dbReference>
<dbReference type="PANTHER" id="PTHR43877">
    <property type="entry name" value="AMINOALKYLPHOSPHONATE N-ACETYLTRANSFERASE-RELATED-RELATED"/>
    <property type="match status" value="1"/>
</dbReference>
<dbReference type="Pfam" id="PF00583">
    <property type="entry name" value="Acetyltransf_1"/>
    <property type="match status" value="1"/>
</dbReference>
<dbReference type="SUPFAM" id="SSF55729">
    <property type="entry name" value="Acyl-CoA N-acyltransferases (Nat)"/>
    <property type="match status" value="1"/>
</dbReference>
<dbReference type="PROSITE" id="PS51186">
    <property type="entry name" value="GNAT"/>
    <property type="match status" value="1"/>
</dbReference>
<evidence type="ECO:0000255" key="1">
    <source>
        <dbReference type="HAMAP-Rule" id="MF_01127"/>
    </source>
</evidence>
<evidence type="ECO:0000305" key="2"/>
<proteinExistence type="inferred from homology"/>
<keyword id="KW-0012">Acyltransferase</keyword>
<keyword id="KW-0808">Transferase</keyword>
<sequence length="141" mass="16326">MEIRVFRQEDFEEVITLWERCDLLRPWNDPEMDIERKMNHDVSLFLVAEVNGEVVGTVMGGYDGHRGSAYYLGVHPEFRGRGIANALLNRLEKKLIARGCPKIQINVPEDNDMVLGMYERLGYEHADVLSLGKRLIEDEEY</sequence>
<name>YPEA_ECOUT</name>